<sequence length="317" mass="36156">MDRLELIKRNVQEIVTEEELEGLLNKKETPRAYVGYEPSGKIHMGHVLTVNKLIDLQKAGFKITVLLADVHAYLNRKGTLEEVRKIADYNRRCFIALGLDEEQTDFVYGSDFQLGAEYMLNVLKLSRAVTLNRAKRSMDEVGRAMDDPTVSQMVYPLMQAIDIALLEVDVAVGGIDQRKIHMLARENLKSLGFETPICIHTPILLGLDGTKMASSKDNFISVDDTEEEIYRKFKKAFCKMGDVEENPILALFRYHIFPRYETIVIERPEKFGGNLVYNSYSEMESGFAEEKVHPMDLKNSAAKYINEILDPVRKVLL</sequence>
<reference key="1">
    <citation type="journal article" date="2002" name="J. Mol. Microbiol. Biotechnol.">
        <title>The genome of Methanosarcina mazei: evidence for lateral gene transfer between Bacteria and Archaea.</title>
        <authorList>
            <person name="Deppenmeier U."/>
            <person name="Johann A."/>
            <person name="Hartsch T."/>
            <person name="Merkl R."/>
            <person name="Schmitz R.A."/>
            <person name="Martinez-Arias R."/>
            <person name="Henne A."/>
            <person name="Wiezer A."/>
            <person name="Baeumer S."/>
            <person name="Jacobi C."/>
            <person name="Brueggemann H."/>
            <person name="Lienard T."/>
            <person name="Christmann A."/>
            <person name="Boemecke M."/>
            <person name="Steckel S."/>
            <person name="Bhattacharyya A."/>
            <person name="Lykidis A."/>
            <person name="Overbeek R."/>
            <person name="Klenk H.-P."/>
            <person name="Gunsalus R.P."/>
            <person name="Fritz H.-J."/>
            <person name="Gottschalk G."/>
        </authorList>
    </citation>
    <scope>NUCLEOTIDE SEQUENCE [LARGE SCALE GENOMIC DNA]</scope>
    <source>
        <strain>ATCC BAA-159 / DSM 3647 / Goe1 / Go1 / JCM 11833 / OCM 88</strain>
    </source>
</reference>
<feature type="chain" id="PRO_0000240258" description="Tyrosine--tRNA ligase">
    <location>
        <begin position="1"/>
        <end position="317"/>
    </location>
</feature>
<feature type="short sequence motif" description="'HIGH' region">
    <location>
        <begin position="38"/>
        <end position="46"/>
    </location>
</feature>
<feature type="short sequence motif" description="'KMSKS' region">
    <location>
        <begin position="211"/>
        <end position="215"/>
    </location>
</feature>
<feature type="binding site" evidence="1">
    <location>
        <position position="33"/>
    </location>
    <ligand>
        <name>L-tyrosine</name>
        <dbReference type="ChEBI" id="CHEBI:58315"/>
    </ligand>
</feature>
<feature type="binding site" evidence="1">
    <location>
        <position position="155"/>
    </location>
    <ligand>
        <name>L-tyrosine</name>
        <dbReference type="ChEBI" id="CHEBI:58315"/>
    </ligand>
</feature>
<feature type="binding site" evidence="1">
    <location>
        <position position="159"/>
    </location>
    <ligand>
        <name>L-tyrosine</name>
        <dbReference type="ChEBI" id="CHEBI:58315"/>
    </ligand>
</feature>
<feature type="binding site" evidence="1">
    <location>
        <position position="162"/>
    </location>
    <ligand>
        <name>L-tyrosine</name>
        <dbReference type="ChEBI" id="CHEBI:58315"/>
    </ligand>
</feature>
<feature type="binding site" evidence="1">
    <location>
        <position position="177"/>
    </location>
    <ligand>
        <name>L-tyrosine</name>
        <dbReference type="ChEBI" id="CHEBI:58315"/>
    </ligand>
</feature>
<feature type="binding site" evidence="1">
    <location>
        <position position="214"/>
    </location>
    <ligand>
        <name>ATP</name>
        <dbReference type="ChEBI" id="CHEBI:30616"/>
    </ligand>
</feature>
<dbReference type="EC" id="6.1.1.1" evidence="1"/>
<dbReference type="EMBL" id="AE008384">
    <property type="protein sequence ID" value="AAM31659.1"/>
    <property type="molecule type" value="Genomic_DNA"/>
</dbReference>
<dbReference type="RefSeq" id="WP_011033895.1">
    <property type="nucleotide sequence ID" value="NC_003901.1"/>
</dbReference>
<dbReference type="SMR" id="Q8PVK0"/>
<dbReference type="KEGG" id="mma:MM_1963"/>
<dbReference type="PATRIC" id="fig|192952.21.peg.2262"/>
<dbReference type="eggNOG" id="arCOG01886">
    <property type="taxonomic scope" value="Archaea"/>
</dbReference>
<dbReference type="HOGENOM" id="CLU_035267_0_1_2"/>
<dbReference type="Proteomes" id="UP000000595">
    <property type="component" value="Chromosome"/>
</dbReference>
<dbReference type="GO" id="GO:0005737">
    <property type="term" value="C:cytoplasm"/>
    <property type="evidence" value="ECO:0007669"/>
    <property type="project" value="UniProtKB-SubCell"/>
</dbReference>
<dbReference type="GO" id="GO:0005524">
    <property type="term" value="F:ATP binding"/>
    <property type="evidence" value="ECO:0007669"/>
    <property type="project" value="UniProtKB-UniRule"/>
</dbReference>
<dbReference type="GO" id="GO:0004831">
    <property type="term" value="F:tyrosine-tRNA ligase activity"/>
    <property type="evidence" value="ECO:0007669"/>
    <property type="project" value="UniProtKB-UniRule"/>
</dbReference>
<dbReference type="GO" id="GO:0006437">
    <property type="term" value="P:tyrosyl-tRNA aminoacylation"/>
    <property type="evidence" value="ECO:0007669"/>
    <property type="project" value="UniProtKB-UniRule"/>
</dbReference>
<dbReference type="CDD" id="cd00805">
    <property type="entry name" value="TyrRS_core"/>
    <property type="match status" value="1"/>
</dbReference>
<dbReference type="Gene3D" id="3.40.50.620">
    <property type="entry name" value="HUPs"/>
    <property type="match status" value="1"/>
</dbReference>
<dbReference type="Gene3D" id="1.10.240.10">
    <property type="entry name" value="Tyrosyl-Transfer RNA Synthetase"/>
    <property type="match status" value="1"/>
</dbReference>
<dbReference type="HAMAP" id="MF_02008">
    <property type="entry name" value="Tyr_tRNA_synth_type3"/>
    <property type="match status" value="1"/>
</dbReference>
<dbReference type="InterPro" id="IPR001412">
    <property type="entry name" value="aa-tRNA-synth_I_CS"/>
</dbReference>
<dbReference type="InterPro" id="IPR002305">
    <property type="entry name" value="aa-tRNA-synth_Ic"/>
</dbReference>
<dbReference type="InterPro" id="IPR014729">
    <property type="entry name" value="Rossmann-like_a/b/a_fold"/>
</dbReference>
<dbReference type="InterPro" id="IPR002307">
    <property type="entry name" value="Tyr-tRNA-ligase"/>
</dbReference>
<dbReference type="InterPro" id="IPR023684">
    <property type="entry name" value="Tyr-tRNA-ligase_3"/>
</dbReference>
<dbReference type="InterPro" id="IPR023617">
    <property type="entry name" value="Tyr-tRNA-ligase_arc/euk-type"/>
</dbReference>
<dbReference type="InterPro" id="IPR050489">
    <property type="entry name" value="Tyr-tRNA_synthase"/>
</dbReference>
<dbReference type="NCBIfam" id="NF006330">
    <property type="entry name" value="PRK08560.1"/>
    <property type="match status" value="1"/>
</dbReference>
<dbReference type="NCBIfam" id="TIGR00234">
    <property type="entry name" value="tyrS"/>
    <property type="match status" value="1"/>
</dbReference>
<dbReference type="PANTHER" id="PTHR46264:SF4">
    <property type="entry name" value="TYROSINE--TRNA LIGASE, CYTOPLASMIC"/>
    <property type="match status" value="1"/>
</dbReference>
<dbReference type="PANTHER" id="PTHR46264">
    <property type="entry name" value="TYROSINE-TRNA LIGASE"/>
    <property type="match status" value="1"/>
</dbReference>
<dbReference type="Pfam" id="PF00579">
    <property type="entry name" value="tRNA-synt_1b"/>
    <property type="match status" value="1"/>
</dbReference>
<dbReference type="PIRSF" id="PIRSF006588">
    <property type="entry name" value="TyrRS_arch_euk"/>
    <property type="match status" value="1"/>
</dbReference>
<dbReference type="PRINTS" id="PR01040">
    <property type="entry name" value="TRNASYNTHTYR"/>
</dbReference>
<dbReference type="SUPFAM" id="SSF52374">
    <property type="entry name" value="Nucleotidylyl transferase"/>
    <property type="match status" value="1"/>
</dbReference>
<dbReference type="PROSITE" id="PS00178">
    <property type="entry name" value="AA_TRNA_LIGASE_I"/>
    <property type="match status" value="1"/>
</dbReference>
<evidence type="ECO:0000255" key="1">
    <source>
        <dbReference type="HAMAP-Rule" id="MF_02008"/>
    </source>
</evidence>
<accession>Q8PVK0</accession>
<name>SYY_METMA</name>
<protein>
    <recommendedName>
        <fullName evidence="1">Tyrosine--tRNA ligase</fullName>
        <ecNumber evidence="1">6.1.1.1</ecNumber>
    </recommendedName>
    <alternativeName>
        <fullName evidence="1">Tyrosyl-tRNA synthetase</fullName>
        <shortName evidence="1">TyrRS</shortName>
    </alternativeName>
</protein>
<comment type="function">
    <text evidence="1">Catalyzes the attachment of tyrosine to tRNA(Tyr) in a two-step reaction: tyrosine is first activated by ATP to form Tyr-AMP and then transferred to the acceptor end of tRNA(Tyr).</text>
</comment>
<comment type="catalytic activity">
    <reaction evidence="1">
        <text>tRNA(Tyr) + L-tyrosine + ATP = L-tyrosyl-tRNA(Tyr) + AMP + diphosphate + H(+)</text>
        <dbReference type="Rhea" id="RHEA:10220"/>
        <dbReference type="Rhea" id="RHEA-COMP:9706"/>
        <dbReference type="Rhea" id="RHEA-COMP:9707"/>
        <dbReference type="ChEBI" id="CHEBI:15378"/>
        <dbReference type="ChEBI" id="CHEBI:30616"/>
        <dbReference type="ChEBI" id="CHEBI:33019"/>
        <dbReference type="ChEBI" id="CHEBI:58315"/>
        <dbReference type="ChEBI" id="CHEBI:78442"/>
        <dbReference type="ChEBI" id="CHEBI:78536"/>
        <dbReference type="ChEBI" id="CHEBI:456215"/>
        <dbReference type="EC" id="6.1.1.1"/>
    </reaction>
</comment>
<comment type="subunit">
    <text evidence="1">Homodimer.</text>
</comment>
<comment type="subcellular location">
    <subcellularLocation>
        <location evidence="1">Cytoplasm</location>
    </subcellularLocation>
</comment>
<comment type="similarity">
    <text evidence="1">Belongs to the class-I aminoacyl-tRNA synthetase family. TyrS type 3 subfamily.</text>
</comment>
<organism>
    <name type="scientific">Methanosarcina mazei (strain ATCC BAA-159 / DSM 3647 / Goe1 / Go1 / JCM 11833 / OCM 88)</name>
    <name type="common">Methanosarcina frisia</name>
    <dbReference type="NCBI Taxonomy" id="192952"/>
    <lineage>
        <taxon>Archaea</taxon>
        <taxon>Methanobacteriati</taxon>
        <taxon>Methanobacteriota</taxon>
        <taxon>Stenosarchaea group</taxon>
        <taxon>Methanomicrobia</taxon>
        <taxon>Methanosarcinales</taxon>
        <taxon>Methanosarcinaceae</taxon>
        <taxon>Methanosarcina</taxon>
    </lineage>
</organism>
<keyword id="KW-0030">Aminoacyl-tRNA synthetase</keyword>
<keyword id="KW-0067">ATP-binding</keyword>
<keyword id="KW-0963">Cytoplasm</keyword>
<keyword id="KW-0436">Ligase</keyword>
<keyword id="KW-0547">Nucleotide-binding</keyword>
<keyword id="KW-0648">Protein biosynthesis</keyword>
<proteinExistence type="inferred from homology"/>
<gene>
    <name evidence="1" type="primary">tyrS</name>
    <name type="ordered locus">MM_1963</name>
</gene>